<name>MURD_PASMU</name>
<comment type="function">
    <text evidence="1">Cell wall formation. Catalyzes the addition of glutamate to the nucleotide precursor UDP-N-acetylmuramoyl-L-alanine (UMA).</text>
</comment>
<comment type="catalytic activity">
    <reaction evidence="1">
        <text>UDP-N-acetyl-alpha-D-muramoyl-L-alanine + D-glutamate + ATP = UDP-N-acetyl-alpha-D-muramoyl-L-alanyl-D-glutamate + ADP + phosphate + H(+)</text>
        <dbReference type="Rhea" id="RHEA:16429"/>
        <dbReference type="ChEBI" id="CHEBI:15378"/>
        <dbReference type="ChEBI" id="CHEBI:29986"/>
        <dbReference type="ChEBI" id="CHEBI:30616"/>
        <dbReference type="ChEBI" id="CHEBI:43474"/>
        <dbReference type="ChEBI" id="CHEBI:83898"/>
        <dbReference type="ChEBI" id="CHEBI:83900"/>
        <dbReference type="ChEBI" id="CHEBI:456216"/>
        <dbReference type="EC" id="6.3.2.9"/>
    </reaction>
</comment>
<comment type="pathway">
    <text evidence="1">Cell wall biogenesis; peptidoglycan biosynthesis.</text>
</comment>
<comment type="subcellular location">
    <subcellularLocation>
        <location evidence="1">Cytoplasm</location>
    </subcellularLocation>
</comment>
<comment type="similarity">
    <text evidence="1">Belongs to the MurCDEF family.</text>
</comment>
<reference key="1">
    <citation type="journal article" date="2001" name="Proc. Natl. Acad. Sci. U.S.A.">
        <title>Complete genomic sequence of Pasteurella multocida Pm70.</title>
        <authorList>
            <person name="May B.J."/>
            <person name="Zhang Q."/>
            <person name="Li L.L."/>
            <person name="Paustian M.L."/>
            <person name="Whittam T.S."/>
            <person name="Kapur V."/>
        </authorList>
    </citation>
    <scope>NUCLEOTIDE SEQUENCE [LARGE SCALE GENOMIC DNA]</scope>
    <source>
        <strain>Pm70</strain>
    </source>
</reference>
<proteinExistence type="inferred from homology"/>
<evidence type="ECO:0000255" key="1">
    <source>
        <dbReference type="HAMAP-Rule" id="MF_00639"/>
    </source>
</evidence>
<dbReference type="EC" id="6.3.2.9" evidence="1"/>
<dbReference type="EMBL" id="AE004439">
    <property type="protein sequence ID" value="AAK02224.1"/>
    <property type="molecule type" value="Genomic_DNA"/>
</dbReference>
<dbReference type="RefSeq" id="WP_010906502.1">
    <property type="nucleotide sequence ID" value="NC_002663.1"/>
</dbReference>
<dbReference type="SMR" id="Q9CPB0"/>
<dbReference type="STRING" id="272843.PM0140"/>
<dbReference type="EnsemblBacteria" id="AAK02224">
    <property type="protein sequence ID" value="AAK02224"/>
    <property type="gene ID" value="PM0140"/>
</dbReference>
<dbReference type="KEGG" id="pmu:PM0140"/>
<dbReference type="HOGENOM" id="CLU_032540_1_0_6"/>
<dbReference type="OrthoDB" id="9809796at2"/>
<dbReference type="UniPathway" id="UPA00219"/>
<dbReference type="Proteomes" id="UP000000809">
    <property type="component" value="Chromosome"/>
</dbReference>
<dbReference type="GO" id="GO:0005737">
    <property type="term" value="C:cytoplasm"/>
    <property type="evidence" value="ECO:0007669"/>
    <property type="project" value="UniProtKB-SubCell"/>
</dbReference>
<dbReference type="GO" id="GO:0005524">
    <property type="term" value="F:ATP binding"/>
    <property type="evidence" value="ECO:0007669"/>
    <property type="project" value="UniProtKB-UniRule"/>
</dbReference>
<dbReference type="GO" id="GO:0008764">
    <property type="term" value="F:UDP-N-acetylmuramoylalanine-D-glutamate ligase activity"/>
    <property type="evidence" value="ECO:0007669"/>
    <property type="project" value="UniProtKB-UniRule"/>
</dbReference>
<dbReference type="GO" id="GO:0051301">
    <property type="term" value="P:cell division"/>
    <property type="evidence" value="ECO:0007669"/>
    <property type="project" value="UniProtKB-KW"/>
</dbReference>
<dbReference type="GO" id="GO:0071555">
    <property type="term" value="P:cell wall organization"/>
    <property type="evidence" value="ECO:0007669"/>
    <property type="project" value="UniProtKB-KW"/>
</dbReference>
<dbReference type="GO" id="GO:0009252">
    <property type="term" value="P:peptidoglycan biosynthetic process"/>
    <property type="evidence" value="ECO:0007669"/>
    <property type="project" value="UniProtKB-UniRule"/>
</dbReference>
<dbReference type="GO" id="GO:0008360">
    <property type="term" value="P:regulation of cell shape"/>
    <property type="evidence" value="ECO:0007669"/>
    <property type="project" value="UniProtKB-KW"/>
</dbReference>
<dbReference type="Gene3D" id="3.90.190.20">
    <property type="entry name" value="Mur ligase, C-terminal domain"/>
    <property type="match status" value="1"/>
</dbReference>
<dbReference type="Gene3D" id="3.40.1190.10">
    <property type="entry name" value="Mur-like, catalytic domain"/>
    <property type="match status" value="1"/>
</dbReference>
<dbReference type="Gene3D" id="3.40.50.720">
    <property type="entry name" value="NAD(P)-binding Rossmann-like Domain"/>
    <property type="match status" value="1"/>
</dbReference>
<dbReference type="HAMAP" id="MF_00639">
    <property type="entry name" value="MurD"/>
    <property type="match status" value="1"/>
</dbReference>
<dbReference type="InterPro" id="IPR036565">
    <property type="entry name" value="Mur-like_cat_sf"/>
</dbReference>
<dbReference type="InterPro" id="IPR004101">
    <property type="entry name" value="Mur_ligase_C"/>
</dbReference>
<dbReference type="InterPro" id="IPR036615">
    <property type="entry name" value="Mur_ligase_C_dom_sf"/>
</dbReference>
<dbReference type="InterPro" id="IPR013221">
    <property type="entry name" value="Mur_ligase_cen"/>
</dbReference>
<dbReference type="InterPro" id="IPR005762">
    <property type="entry name" value="MurD"/>
</dbReference>
<dbReference type="NCBIfam" id="TIGR01087">
    <property type="entry name" value="murD"/>
    <property type="match status" value="1"/>
</dbReference>
<dbReference type="PANTHER" id="PTHR43692">
    <property type="entry name" value="UDP-N-ACETYLMURAMOYLALANINE--D-GLUTAMATE LIGASE"/>
    <property type="match status" value="1"/>
</dbReference>
<dbReference type="PANTHER" id="PTHR43692:SF1">
    <property type="entry name" value="UDP-N-ACETYLMURAMOYLALANINE--D-GLUTAMATE LIGASE"/>
    <property type="match status" value="1"/>
</dbReference>
<dbReference type="Pfam" id="PF02875">
    <property type="entry name" value="Mur_ligase_C"/>
    <property type="match status" value="1"/>
</dbReference>
<dbReference type="Pfam" id="PF08245">
    <property type="entry name" value="Mur_ligase_M"/>
    <property type="match status" value="1"/>
</dbReference>
<dbReference type="Pfam" id="PF21799">
    <property type="entry name" value="MurD-like_N"/>
    <property type="match status" value="1"/>
</dbReference>
<dbReference type="Pfam" id="PF13241">
    <property type="entry name" value="NAD_binding_7"/>
    <property type="match status" value="1"/>
</dbReference>
<dbReference type="SUPFAM" id="SSF51984">
    <property type="entry name" value="MurCD N-terminal domain"/>
    <property type="match status" value="1"/>
</dbReference>
<dbReference type="SUPFAM" id="SSF53623">
    <property type="entry name" value="MurD-like peptide ligases, catalytic domain"/>
    <property type="match status" value="1"/>
</dbReference>
<dbReference type="SUPFAM" id="SSF53244">
    <property type="entry name" value="MurD-like peptide ligases, peptide-binding domain"/>
    <property type="match status" value="1"/>
</dbReference>
<feature type="chain" id="PRO_0000109054" description="UDP-N-acetylmuramoylalanine--D-glutamate ligase">
    <location>
        <begin position="1"/>
        <end position="434"/>
    </location>
</feature>
<feature type="binding site" evidence="1">
    <location>
        <begin position="113"/>
        <end position="119"/>
    </location>
    <ligand>
        <name>ATP</name>
        <dbReference type="ChEBI" id="CHEBI:30616"/>
    </ligand>
</feature>
<gene>
    <name evidence="1" type="primary">murD</name>
    <name type="ordered locus">PM0140</name>
</gene>
<organism>
    <name type="scientific">Pasteurella multocida (strain Pm70)</name>
    <dbReference type="NCBI Taxonomy" id="272843"/>
    <lineage>
        <taxon>Bacteria</taxon>
        <taxon>Pseudomonadati</taxon>
        <taxon>Pseudomonadota</taxon>
        <taxon>Gammaproteobacteria</taxon>
        <taxon>Pasteurellales</taxon>
        <taxon>Pasteurellaceae</taxon>
        <taxon>Pasteurella</taxon>
    </lineage>
</organism>
<keyword id="KW-0067">ATP-binding</keyword>
<keyword id="KW-0131">Cell cycle</keyword>
<keyword id="KW-0132">Cell division</keyword>
<keyword id="KW-0133">Cell shape</keyword>
<keyword id="KW-0961">Cell wall biogenesis/degradation</keyword>
<keyword id="KW-0963">Cytoplasm</keyword>
<keyword id="KW-0436">Ligase</keyword>
<keyword id="KW-0547">Nucleotide-binding</keyword>
<keyword id="KW-0573">Peptidoglycan synthesis</keyword>
<keyword id="KW-1185">Reference proteome</keyword>
<accession>Q9CPB0</accession>
<protein>
    <recommendedName>
        <fullName evidence="1">UDP-N-acetylmuramoylalanine--D-glutamate ligase</fullName>
        <ecNumber evidence="1">6.3.2.9</ecNumber>
    </recommendedName>
    <alternativeName>
        <fullName evidence="1">D-glutamic acid-adding enzyme</fullName>
    </alternativeName>
    <alternativeName>
        <fullName evidence="1">UDP-N-acetylmuramoyl-L-alanyl-D-glutamate synthetase</fullName>
    </alternativeName>
</protein>
<sequence length="434" mass="46935">MQTSYKNKKVTVIGLGKTGLSCVDFLLAKQADVRVIDTRTQPAGAEQLAKNVPLHTGSLNQQWLLESDLIIISPGLAVKTPEIQTALAAGIEVIGDIELFCREAKKPIIAITGSNGKSTVTSLVAHMVNAAGLKVGMGGNIGIPALSLLEQAHDMYVLELSSFQLETTYSLKATSATVLNISEDHMNRYVDLEDYRQAKLKIYHHAQTAVINAEDALTAMDGLKNGVSFGEDNADYWLKTEKGRSYLMAKDERVLACDEMKLVGRHNYMNALAAIALAQAAGIPLESIRRALREFNGLDHRFQLAHFAHGVRWVNDSKATNVGSTVAALTGLQLNGTLHLLLGGDGKGADFSELASLINQPNIICYCFGQDGEQLAALSPRSQRFSTMEEAINALRPTLSAGDMVLLSPACASLDQFSSFEQRGDEFTRLAKLS</sequence>